<comment type="function">
    <text evidence="1">Catalyzes the attachment of L-aspartate to tRNA(Asp) in a two-step reaction: L-aspartate is first activated by ATP to form Asp-AMP and then transferred to the acceptor end of tRNA(Asp).</text>
</comment>
<comment type="catalytic activity">
    <reaction evidence="1">
        <text>tRNA(Asp) + L-aspartate + ATP = L-aspartyl-tRNA(Asp) + AMP + diphosphate</text>
        <dbReference type="Rhea" id="RHEA:19649"/>
        <dbReference type="Rhea" id="RHEA-COMP:9660"/>
        <dbReference type="Rhea" id="RHEA-COMP:9678"/>
        <dbReference type="ChEBI" id="CHEBI:29991"/>
        <dbReference type="ChEBI" id="CHEBI:30616"/>
        <dbReference type="ChEBI" id="CHEBI:33019"/>
        <dbReference type="ChEBI" id="CHEBI:78442"/>
        <dbReference type="ChEBI" id="CHEBI:78516"/>
        <dbReference type="ChEBI" id="CHEBI:456215"/>
        <dbReference type="EC" id="6.1.1.12"/>
    </reaction>
</comment>
<comment type="subunit">
    <text evidence="1">Homodimer.</text>
</comment>
<comment type="subcellular location">
    <subcellularLocation>
        <location evidence="1">Cytoplasm</location>
    </subcellularLocation>
</comment>
<comment type="similarity">
    <text evidence="1">Belongs to the class-II aminoacyl-tRNA synthetase family. Type 1 subfamily.</text>
</comment>
<evidence type="ECO:0000255" key="1">
    <source>
        <dbReference type="HAMAP-Rule" id="MF_00044"/>
    </source>
</evidence>
<sequence length="592" mass="65988">MRSHYCGDVNKSHVGQEVTLVGWVNRSRDLGGVVFLDLRDREGLIQVVYDPDLPEVFNVASTLRAEFCVQVKGLVRARPDSQVNGQMKTGEIEVLGQALTIINAADPLPLSMDNYQNNSEEQRLKYRYLDLRRPEMAQRLIFRAKVTSSVRRFLDSNGFLDIETPILTKATPEGARDYLVPSRTYKGQFFALPQSPQLFKQLLMMSGFDRYYQIVKCFRDEDLRADRQPEFTQIDIETSFMSSEQVMAKTEEMMRGLFLEMLNVDLGEFPRMTYNEAMRRFGSDKPDLRNPLELVDIADLLKEVEFAVFSGPANDEEGRVAALRIPGGAALSRKQIDDYTKFVGIYGAKGLAWMKINDLSLGLEGIQSPVLKFLNESIVNEIVSRTGAQTGDIILFGADQATVVAESMGALRLKAGEDFNLLQGEWRPLWVVDFPMFEKINGNFHAVHHPFTAPRGVTAAELEANPANRVSDAYDMVLNGCELGGGSVRIHNQEMQSAVFRILGITDEEAKEKFGFLLEALRYGTPPHAGLAFGLDRIIMLMTGASSIRDVMAFPKTTTAACPLTNAPGFANPQQLAELGIAVVEKAVKTED</sequence>
<gene>
    <name evidence="1" type="primary">aspS</name>
    <name type="ordered locus">Sbal223_2040</name>
</gene>
<proteinExistence type="inferred from homology"/>
<feature type="chain" id="PRO_1000199009" description="Aspartate--tRNA ligase">
    <location>
        <begin position="1"/>
        <end position="592"/>
    </location>
</feature>
<feature type="region of interest" description="Aspartate" evidence="1">
    <location>
        <begin position="197"/>
        <end position="200"/>
    </location>
</feature>
<feature type="binding site" evidence="1">
    <location>
        <position position="173"/>
    </location>
    <ligand>
        <name>L-aspartate</name>
        <dbReference type="ChEBI" id="CHEBI:29991"/>
    </ligand>
</feature>
<feature type="binding site" evidence="1">
    <location>
        <begin position="219"/>
        <end position="221"/>
    </location>
    <ligand>
        <name>ATP</name>
        <dbReference type="ChEBI" id="CHEBI:30616"/>
    </ligand>
</feature>
<feature type="binding site" evidence="1">
    <location>
        <position position="219"/>
    </location>
    <ligand>
        <name>L-aspartate</name>
        <dbReference type="ChEBI" id="CHEBI:29991"/>
    </ligand>
</feature>
<feature type="binding site" evidence="1">
    <location>
        <position position="228"/>
    </location>
    <ligand>
        <name>ATP</name>
        <dbReference type="ChEBI" id="CHEBI:30616"/>
    </ligand>
</feature>
<feature type="binding site" evidence="1">
    <location>
        <position position="448"/>
    </location>
    <ligand>
        <name>L-aspartate</name>
        <dbReference type="ChEBI" id="CHEBI:29991"/>
    </ligand>
</feature>
<feature type="binding site" evidence="1">
    <location>
        <position position="482"/>
    </location>
    <ligand>
        <name>ATP</name>
        <dbReference type="ChEBI" id="CHEBI:30616"/>
    </ligand>
</feature>
<feature type="binding site" evidence="1">
    <location>
        <position position="489"/>
    </location>
    <ligand>
        <name>L-aspartate</name>
        <dbReference type="ChEBI" id="CHEBI:29991"/>
    </ligand>
</feature>
<feature type="binding site" evidence="1">
    <location>
        <begin position="534"/>
        <end position="537"/>
    </location>
    <ligand>
        <name>ATP</name>
        <dbReference type="ChEBI" id="CHEBI:30616"/>
    </ligand>
</feature>
<reference key="1">
    <citation type="submission" date="2008-12" db="EMBL/GenBank/DDBJ databases">
        <title>Complete sequence of chromosome of Shewanella baltica OS223.</title>
        <authorList>
            <consortium name="US DOE Joint Genome Institute"/>
            <person name="Lucas S."/>
            <person name="Copeland A."/>
            <person name="Lapidus A."/>
            <person name="Glavina del Rio T."/>
            <person name="Dalin E."/>
            <person name="Tice H."/>
            <person name="Bruce D."/>
            <person name="Goodwin L."/>
            <person name="Pitluck S."/>
            <person name="Chertkov O."/>
            <person name="Meincke L."/>
            <person name="Brettin T."/>
            <person name="Detter J.C."/>
            <person name="Han C."/>
            <person name="Kuske C.R."/>
            <person name="Larimer F."/>
            <person name="Land M."/>
            <person name="Hauser L."/>
            <person name="Kyrpides N."/>
            <person name="Ovchinnikova G."/>
            <person name="Brettar I."/>
            <person name="Rodrigues J."/>
            <person name="Konstantinidis K."/>
            <person name="Tiedje J."/>
        </authorList>
    </citation>
    <scope>NUCLEOTIDE SEQUENCE [LARGE SCALE GENOMIC DNA]</scope>
    <source>
        <strain>OS223</strain>
    </source>
</reference>
<accession>B8EA71</accession>
<protein>
    <recommendedName>
        <fullName evidence="1">Aspartate--tRNA ligase</fullName>
        <ecNumber evidence="1">6.1.1.12</ecNumber>
    </recommendedName>
    <alternativeName>
        <fullName evidence="1">Aspartyl-tRNA synthetase</fullName>
        <shortName evidence="1">AspRS</shortName>
    </alternativeName>
</protein>
<name>SYD_SHEB2</name>
<dbReference type="EC" id="6.1.1.12" evidence="1"/>
<dbReference type="EMBL" id="CP001252">
    <property type="protein sequence ID" value="ACK46544.1"/>
    <property type="molecule type" value="Genomic_DNA"/>
</dbReference>
<dbReference type="RefSeq" id="WP_012089298.1">
    <property type="nucleotide sequence ID" value="NC_011663.1"/>
</dbReference>
<dbReference type="SMR" id="B8EA71"/>
<dbReference type="KEGG" id="sbp:Sbal223_2040"/>
<dbReference type="HOGENOM" id="CLU_014330_3_2_6"/>
<dbReference type="Proteomes" id="UP000002507">
    <property type="component" value="Chromosome"/>
</dbReference>
<dbReference type="GO" id="GO:0005737">
    <property type="term" value="C:cytoplasm"/>
    <property type="evidence" value="ECO:0007669"/>
    <property type="project" value="UniProtKB-SubCell"/>
</dbReference>
<dbReference type="GO" id="GO:0004815">
    <property type="term" value="F:aspartate-tRNA ligase activity"/>
    <property type="evidence" value="ECO:0007669"/>
    <property type="project" value="UniProtKB-UniRule"/>
</dbReference>
<dbReference type="GO" id="GO:0005524">
    <property type="term" value="F:ATP binding"/>
    <property type="evidence" value="ECO:0007669"/>
    <property type="project" value="UniProtKB-UniRule"/>
</dbReference>
<dbReference type="GO" id="GO:0003676">
    <property type="term" value="F:nucleic acid binding"/>
    <property type="evidence" value="ECO:0007669"/>
    <property type="project" value="InterPro"/>
</dbReference>
<dbReference type="GO" id="GO:0006422">
    <property type="term" value="P:aspartyl-tRNA aminoacylation"/>
    <property type="evidence" value="ECO:0007669"/>
    <property type="project" value="UniProtKB-UniRule"/>
</dbReference>
<dbReference type="CDD" id="cd00777">
    <property type="entry name" value="AspRS_core"/>
    <property type="match status" value="1"/>
</dbReference>
<dbReference type="CDD" id="cd04317">
    <property type="entry name" value="EcAspRS_like_N"/>
    <property type="match status" value="1"/>
</dbReference>
<dbReference type="FunFam" id="2.40.50.140:FF:000080">
    <property type="entry name" value="Aspartate--tRNA ligase"/>
    <property type="match status" value="1"/>
</dbReference>
<dbReference type="Gene3D" id="3.30.930.10">
    <property type="entry name" value="Bira Bifunctional Protein, Domain 2"/>
    <property type="match status" value="1"/>
</dbReference>
<dbReference type="Gene3D" id="3.30.1360.30">
    <property type="entry name" value="GAD-like domain"/>
    <property type="match status" value="1"/>
</dbReference>
<dbReference type="Gene3D" id="2.40.50.140">
    <property type="entry name" value="Nucleic acid-binding proteins"/>
    <property type="match status" value="1"/>
</dbReference>
<dbReference type="HAMAP" id="MF_00044">
    <property type="entry name" value="Asp_tRNA_synth_type1"/>
    <property type="match status" value="1"/>
</dbReference>
<dbReference type="InterPro" id="IPR004364">
    <property type="entry name" value="Aa-tRNA-synt_II"/>
</dbReference>
<dbReference type="InterPro" id="IPR006195">
    <property type="entry name" value="aa-tRNA-synth_II"/>
</dbReference>
<dbReference type="InterPro" id="IPR045864">
    <property type="entry name" value="aa-tRNA-synth_II/BPL/LPL"/>
</dbReference>
<dbReference type="InterPro" id="IPR004524">
    <property type="entry name" value="Asp-tRNA-ligase_1"/>
</dbReference>
<dbReference type="InterPro" id="IPR047089">
    <property type="entry name" value="Asp-tRNA-ligase_1_N"/>
</dbReference>
<dbReference type="InterPro" id="IPR002312">
    <property type="entry name" value="Asp/Asn-tRNA-synth_IIb"/>
</dbReference>
<dbReference type="InterPro" id="IPR047090">
    <property type="entry name" value="AspRS_core"/>
</dbReference>
<dbReference type="InterPro" id="IPR004115">
    <property type="entry name" value="GAD-like_sf"/>
</dbReference>
<dbReference type="InterPro" id="IPR029351">
    <property type="entry name" value="GAD_dom"/>
</dbReference>
<dbReference type="InterPro" id="IPR012340">
    <property type="entry name" value="NA-bd_OB-fold"/>
</dbReference>
<dbReference type="InterPro" id="IPR004365">
    <property type="entry name" value="NA-bd_OB_tRNA"/>
</dbReference>
<dbReference type="NCBIfam" id="TIGR00459">
    <property type="entry name" value="aspS_bact"/>
    <property type="match status" value="1"/>
</dbReference>
<dbReference type="NCBIfam" id="NF001750">
    <property type="entry name" value="PRK00476.1"/>
    <property type="match status" value="1"/>
</dbReference>
<dbReference type="PANTHER" id="PTHR22594:SF5">
    <property type="entry name" value="ASPARTATE--TRNA LIGASE, MITOCHONDRIAL"/>
    <property type="match status" value="1"/>
</dbReference>
<dbReference type="PANTHER" id="PTHR22594">
    <property type="entry name" value="ASPARTYL/LYSYL-TRNA SYNTHETASE"/>
    <property type="match status" value="1"/>
</dbReference>
<dbReference type="Pfam" id="PF02938">
    <property type="entry name" value="GAD"/>
    <property type="match status" value="1"/>
</dbReference>
<dbReference type="Pfam" id="PF00152">
    <property type="entry name" value="tRNA-synt_2"/>
    <property type="match status" value="1"/>
</dbReference>
<dbReference type="Pfam" id="PF01336">
    <property type="entry name" value="tRNA_anti-codon"/>
    <property type="match status" value="1"/>
</dbReference>
<dbReference type="PRINTS" id="PR01042">
    <property type="entry name" value="TRNASYNTHASP"/>
</dbReference>
<dbReference type="SUPFAM" id="SSF55681">
    <property type="entry name" value="Class II aaRS and biotin synthetases"/>
    <property type="match status" value="1"/>
</dbReference>
<dbReference type="SUPFAM" id="SSF55261">
    <property type="entry name" value="GAD domain-like"/>
    <property type="match status" value="1"/>
</dbReference>
<dbReference type="SUPFAM" id="SSF50249">
    <property type="entry name" value="Nucleic acid-binding proteins"/>
    <property type="match status" value="1"/>
</dbReference>
<dbReference type="PROSITE" id="PS50862">
    <property type="entry name" value="AA_TRNA_LIGASE_II"/>
    <property type="match status" value="1"/>
</dbReference>
<keyword id="KW-0030">Aminoacyl-tRNA synthetase</keyword>
<keyword id="KW-0067">ATP-binding</keyword>
<keyword id="KW-0963">Cytoplasm</keyword>
<keyword id="KW-0436">Ligase</keyword>
<keyword id="KW-0547">Nucleotide-binding</keyword>
<keyword id="KW-0648">Protein biosynthesis</keyword>
<organism>
    <name type="scientific">Shewanella baltica (strain OS223)</name>
    <dbReference type="NCBI Taxonomy" id="407976"/>
    <lineage>
        <taxon>Bacteria</taxon>
        <taxon>Pseudomonadati</taxon>
        <taxon>Pseudomonadota</taxon>
        <taxon>Gammaproteobacteria</taxon>
        <taxon>Alteromonadales</taxon>
        <taxon>Shewanellaceae</taxon>
        <taxon>Shewanella</taxon>
    </lineage>
</organism>